<feature type="signal peptide" evidence="2">
    <location>
        <begin position="1"/>
        <end position="34"/>
    </location>
</feature>
<feature type="chain" id="PRO_0000023831" description="Cytochrome f">
    <location>
        <begin position="35"/>
        <end position="319"/>
    </location>
</feature>
<feature type="transmembrane region" description="Helical" evidence="2">
    <location>
        <begin position="285"/>
        <end position="305"/>
    </location>
</feature>
<feature type="binding site" description="axial binding residue" evidence="2">
    <location>
        <position position="35"/>
    </location>
    <ligand>
        <name>heme</name>
        <dbReference type="ChEBI" id="CHEBI:30413"/>
    </ligand>
    <ligandPart>
        <name>Fe</name>
        <dbReference type="ChEBI" id="CHEBI:18248"/>
    </ligandPart>
</feature>
<feature type="binding site" description="covalent" evidence="2">
    <location>
        <position position="55"/>
    </location>
    <ligand>
        <name>heme</name>
        <dbReference type="ChEBI" id="CHEBI:30413"/>
    </ligand>
</feature>
<feature type="binding site" description="covalent" evidence="2">
    <location>
        <position position="58"/>
    </location>
    <ligand>
        <name>heme</name>
        <dbReference type="ChEBI" id="CHEBI:30413"/>
    </ligand>
</feature>
<feature type="binding site" description="axial binding residue" evidence="2">
    <location>
        <position position="59"/>
    </location>
    <ligand>
        <name>heme</name>
        <dbReference type="ChEBI" id="CHEBI:30413"/>
    </ligand>
    <ligandPart>
        <name>Fe</name>
        <dbReference type="ChEBI" id="CHEBI:18248"/>
    </ligandPart>
</feature>
<dbReference type="EMBL" id="AY228468">
    <property type="protein sequence ID" value="AAO74036.1"/>
    <property type="molecule type" value="Genomic_DNA"/>
</dbReference>
<dbReference type="RefSeq" id="NP_817188.1">
    <property type="nucleotide sequence ID" value="NC_004677.2"/>
</dbReference>
<dbReference type="SMR" id="Q85X29"/>
<dbReference type="GeneID" id="806917"/>
<dbReference type="GO" id="GO:0009535">
    <property type="term" value="C:chloroplast thylakoid membrane"/>
    <property type="evidence" value="ECO:0007669"/>
    <property type="project" value="UniProtKB-SubCell"/>
</dbReference>
<dbReference type="GO" id="GO:0009055">
    <property type="term" value="F:electron transfer activity"/>
    <property type="evidence" value="ECO:0007669"/>
    <property type="project" value="UniProtKB-UniRule"/>
</dbReference>
<dbReference type="GO" id="GO:0020037">
    <property type="term" value="F:heme binding"/>
    <property type="evidence" value="ECO:0007669"/>
    <property type="project" value="InterPro"/>
</dbReference>
<dbReference type="GO" id="GO:0005506">
    <property type="term" value="F:iron ion binding"/>
    <property type="evidence" value="ECO:0007669"/>
    <property type="project" value="InterPro"/>
</dbReference>
<dbReference type="GO" id="GO:0015979">
    <property type="term" value="P:photosynthesis"/>
    <property type="evidence" value="ECO:0007669"/>
    <property type="project" value="UniProtKB-UniRule"/>
</dbReference>
<dbReference type="FunFam" id="1.20.5.700:FF:000001">
    <property type="entry name" value="Cytochrome f"/>
    <property type="match status" value="1"/>
</dbReference>
<dbReference type="FunFam" id="2.40.50.100:FF:000007">
    <property type="entry name" value="Cytochrome f"/>
    <property type="match status" value="1"/>
</dbReference>
<dbReference type="FunFam" id="2.60.40.830:FF:000001">
    <property type="entry name" value="Cytochrome f"/>
    <property type="match status" value="1"/>
</dbReference>
<dbReference type="Gene3D" id="2.40.50.100">
    <property type="match status" value="1"/>
</dbReference>
<dbReference type="Gene3D" id="2.60.40.830">
    <property type="entry name" value="Cytochrome f large domain"/>
    <property type="match status" value="1"/>
</dbReference>
<dbReference type="Gene3D" id="1.20.5.700">
    <property type="entry name" value="Single helix bin"/>
    <property type="match status" value="1"/>
</dbReference>
<dbReference type="HAMAP" id="MF_00610">
    <property type="entry name" value="Cytb6_f_cytF"/>
    <property type="match status" value="1"/>
</dbReference>
<dbReference type="InterPro" id="IPR024058">
    <property type="entry name" value="Cyt-f_TM"/>
</dbReference>
<dbReference type="InterPro" id="IPR002325">
    <property type="entry name" value="Cyt_f"/>
</dbReference>
<dbReference type="InterPro" id="IPR024094">
    <property type="entry name" value="Cyt_f_lg_dom"/>
</dbReference>
<dbReference type="InterPro" id="IPR036826">
    <property type="entry name" value="Cyt_f_lg_dom_sf"/>
</dbReference>
<dbReference type="InterPro" id="IPR011054">
    <property type="entry name" value="Rudment_hybrid_motif"/>
</dbReference>
<dbReference type="PANTHER" id="PTHR33288">
    <property type="match status" value="1"/>
</dbReference>
<dbReference type="PANTHER" id="PTHR33288:SF10">
    <property type="entry name" value="CYTOCHROME F"/>
    <property type="match status" value="1"/>
</dbReference>
<dbReference type="Pfam" id="PF01333">
    <property type="entry name" value="Apocytochr_F_C"/>
    <property type="match status" value="1"/>
</dbReference>
<dbReference type="Pfam" id="PF16639">
    <property type="entry name" value="Apocytochr_F_N"/>
    <property type="match status" value="1"/>
</dbReference>
<dbReference type="PRINTS" id="PR00610">
    <property type="entry name" value="CYTOCHROMEF"/>
</dbReference>
<dbReference type="SUPFAM" id="SSF103431">
    <property type="entry name" value="Cytochrome f subunit of the cytochrome b6f complex, transmembrane anchor"/>
    <property type="match status" value="1"/>
</dbReference>
<dbReference type="SUPFAM" id="SSF49441">
    <property type="entry name" value="Cytochrome f, large domain"/>
    <property type="match status" value="1"/>
</dbReference>
<dbReference type="SUPFAM" id="SSF51246">
    <property type="entry name" value="Rudiment single hybrid motif"/>
    <property type="match status" value="1"/>
</dbReference>
<dbReference type="PROSITE" id="PS51010">
    <property type="entry name" value="CYTF"/>
    <property type="match status" value="1"/>
</dbReference>
<gene>
    <name evidence="2" type="primary">petA</name>
</gene>
<proteinExistence type="inferred from homology"/>
<sequence>MQNRNTYEWTKKMTRLISVLVMIHIITRTSISNAYPIFAQQGYENPREATGRIVCANCHLAKKPVDIEVPQSVLPNTVFEAIVKIPYDTQMKQVLANGKKGALNVGAVLILPEGFELAPPDRISPEIRQKTGNLYFQNYRPNQKNIIVIGPVPGQKYSELVFPILSPDPATDKEAHFLKYPIYVGGNRGRGQIYPDGSKSNNTVYSASATGRVSKILRKEKGGYEITIDNKSDGGQVVDIVPPGPELLISEGELIKVDQPLTNNPNMGGFGQGDAEIVLQDPLRVKGLLLFLASVILAQIFLVLKKKQFEKVQLAEMNL</sequence>
<reference key="1">
    <citation type="submission" date="2003-02" db="EMBL/GenBank/DDBJ databases">
        <title>Complete nucleotide sequence of Pinus koraiensis.</title>
        <authorList>
            <person name="Noh E.W."/>
            <person name="Lee J.S."/>
            <person name="Choi Y.I."/>
            <person name="Han M.S."/>
            <person name="Yi Y.S."/>
            <person name="Han S.U."/>
        </authorList>
    </citation>
    <scope>NUCLEOTIDE SEQUENCE [LARGE SCALE GENOMIC DNA]</scope>
    <source>
        <strain>KangWon16</strain>
    </source>
</reference>
<name>CYF_PINKO</name>
<organism>
    <name type="scientific">Pinus koraiensis</name>
    <name type="common">Korean pine</name>
    <dbReference type="NCBI Taxonomy" id="88728"/>
    <lineage>
        <taxon>Eukaryota</taxon>
        <taxon>Viridiplantae</taxon>
        <taxon>Streptophyta</taxon>
        <taxon>Embryophyta</taxon>
        <taxon>Tracheophyta</taxon>
        <taxon>Spermatophyta</taxon>
        <taxon>Pinopsida</taxon>
        <taxon>Pinidae</taxon>
        <taxon>Conifers I</taxon>
        <taxon>Pinales</taxon>
        <taxon>Pinaceae</taxon>
        <taxon>Pinus</taxon>
        <taxon>Pinus subgen. Strobus</taxon>
    </lineage>
</organism>
<protein>
    <recommendedName>
        <fullName evidence="2">Cytochrome f</fullName>
    </recommendedName>
</protein>
<keyword id="KW-0150">Chloroplast</keyword>
<keyword id="KW-0249">Electron transport</keyword>
<keyword id="KW-0349">Heme</keyword>
<keyword id="KW-0408">Iron</keyword>
<keyword id="KW-0472">Membrane</keyword>
<keyword id="KW-0479">Metal-binding</keyword>
<keyword id="KW-0602">Photosynthesis</keyword>
<keyword id="KW-0934">Plastid</keyword>
<keyword id="KW-0732">Signal</keyword>
<keyword id="KW-0793">Thylakoid</keyword>
<keyword id="KW-0812">Transmembrane</keyword>
<keyword id="KW-1133">Transmembrane helix</keyword>
<keyword id="KW-0813">Transport</keyword>
<geneLocation type="chloroplast"/>
<accession>Q85X29</accession>
<comment type="function">
    <text evidence="2">Component of the cytochrome b6-f complex, which mediates electron transfer between photosystem II (PSII) and photosystem I (PSI), cyclic electron flow around PSI, and state transitions.</text>
</comment>
<comment type="cofactor">
    <cofactor evidence="2">
        <name>heme</name>
        <dbReference type="ChEBI" id="CHEBI:30413"/>
    </cofactor>
    <text evidence="2">Binds 1 heme group covalently.</text>
</comment>
<comment type="subunit">
    <text evidence="1">The 4 large subunits of the cytochrome b6-f complex are cytochrome b6, subunit IV (17 kDa polypeptide, petD), cytochrome f and the Rieske protein, while the 4 small subunits are PetG, PetL, PetM and PetN. The complex functions as a dimer (By similarity).</text>
</comment>
<comment type="subcellular location">
    <subcellularLocation>
        <location evidence="2">Plastid</location>
        <location evidence="2">Chloroplast thylakoid membrane</location>
        <topology evidence="2">Single-pass membrane protein</topology>
    </subcellularLocation>
</comment>
<comment type="similarity">
    <text evidence="2">Belongs to the cytochrome f family.</text>
</comment>
<evidence type="ECO:0000250" key="1"/>
<evidence type="ECO:0000255" key="2">
    <source>
        <dbReference type="HAMAP-Rule" id="MF_00610"/>
    </source>
</evidence>